<gene>
    <name evidence="1" type="primary">lipA</name>
    <name type="ordered locus">PFLU_5416</name>
</gene>
<proteinExistence type="inferred from homology"/>
<organism>
    <name type="scientific">Pseudomonas fluorescens (strain SBW25)</name>
    <dbReference type="NCBI Taxonomy" id="216595"/>
    <lineage>
        <taxon>Bacteria</taxon>
        <taxon>Pseudomonadati</taxon>
        <taxon>Pseudomonadota</taxon>
        <taxon>Gammaproteobacteria</taxon>
        <taxon>Pseudomonadales</taxon>
        <taxon>Pseudomonadaceae</taxon>
        <taxon>Pseudomonas</taxon>
    </lineage>
</organism>
<dbReference type="EC" id="2.8.1.8" evidence="1"/>
<dbReference type="EMBL" id="AM181176">
    <property type="protein sequence ID" value="CAY52590.1"/>
    <property type="molecule type" value="Genomic_DNA"/>
</dbReference>
<dbReference type="SMR" id="C3K2L8"/>
<dbReference type="STRING" id="294.SRM1_05038"/>
<dbReference type="eggNOG" id="COG0320">
    <property type="taxonomic scope" value="Bacteria"/>
</dbReference>
<dbReference type="HOGENOM" id="CLU_033144_2_1_6"/>
<dbReference type="OrthoDB" id="9787898at2"/>
<dbReference type="UniPathway" id="UPA00538">
    <property type="reaction ID" value="UER00593"/>
</dbReference>
<dbReference type="GO" id="GO:0005737">
    <property type="term" value="C:cytoplasm"/>
    <property type="evidence" value="ECO:0007669"/>
    <property type="project" value="UniProtKB-SubCell"/>
</dbReference>
<dbReference type="GO" id="GO:0051539">
    <property type="term" value="F:4 iron, 4 sulfur cluster binding"/>
    <property type="evidence" value="ECO:0007669"/>
    <property type="project" value="UniProtKB-UniRule"/>
</dbReference>
<dbReference type="GO" id="GO:0016992">
    <property type="term" value="F:lipoate synthase activity"/>
    <property type="evidence" value="ECO:0007669"/>
    <property type="project" value="UniProtKB-UniRule"/>
</dbReference>
<dbReference type="GO" id="GO:0046872">
    <property type="term" value="F:metal ion binding"/>
    <property type="evidence" value="ECO:0007669"/>
    <property type="project" value="UniProtKB-KW"/>
</dbReference>
<dbReference type="CDD" id="cd01335">
    <property type="entry name" value="Radical_SAM"/>
    <property type="match status" value="1"/>
</dbReference>
<dbReference type="FunFam" id="3.20.20.70:FF:000023">
    <property type="entry name" value="Lipoyl synthase"/>
    <property type="match status" value="1"/>
</dbReference>
<dbReference type="Gene3D" id="3.20.20.70">
    <property type="entry name" value="Aldolase class I"/>
    <property type="match status" value="1"/>
</dbReference>
<dbReference type="HAMAP" id="MF_00206">
    <property type="entry name" value="Lipoyl_synth"/>
    <property type="match status" value="1"/>
</dbReference>
<dbReference type="InterPro" id="IPR013785">
    <property type="entry name" value="Aldolase_TIM"/>
</dbReference>
<dbReference type="InterPro" id="IPR006638">
    <property type="entry name" value="Elp3/MiaA/NifB-like_rSAM"/>
</dbReference>
<dbReference type="InterPro" id="IPR031691">
    <property type="entry name" value="LIAS_N"/>
</dbReference>
<dbReference type="InterPro" id="IPR003698">
    <property type="entry name" value="Lipoyl_synth"/>
</dbReference>
<dbReference type="InterPro" id="IPR007197">
    <property type="entry name" value="rSAM"/>
</dbReference>
<dbReference type="NCBIfam" id="TIGR00510">
    <property type="entry name" value="lipA"/>
    <property type="match status" value="1"/>
</dbReference>
<dbReference type="NCBIfam" id="NF004019">
    <property type="entry name" value="PRK05481.1"/>
    <property type="match status" value="1"/>
</dbReference>
<dbReference type="NCBIfam" id="NF009544">
    <property type="entry name" value="PRK12928.1"/>
    <property type="match status" value="1"/>
</dbReference>
<dbReference type="PANTHER" id="PTHR10949">
    <property type="entry name" value="LIPOYL SYNTHASE"/>
    <property type="match status" value="1"/>
</dbReference>
<dbReference type="PANTHER" id="PTHR10949:SF0">
    <property type="entry name" value="LIPOYL SYNTHASE, MITOCHONDRIAL"/>
    <property type="match status" value="1"/>
</dbReference>
<dbReference type="Pfam" id="PF16881">
    <property type="entry name" value="LIAS_N"/>
    <property type="match status" value="1"/>
</dbReference>
<dbReference type="Pfam" id="PF04055">
    <property type="entry name" value="Radical_SAM"/>
    <property type="match status" value="1"/>
</dbReference>
<dbReference type="PIRSF" id="PIRSF005963">
    <property type="entry name" value="Lipoyl_synth"/>
    <property type="match status" value="1"/>
</dbReference>
<dbReference type="SFLD" id="SFLDF00271">
    <property type="entry name" value="lipoyl_synthase"/>
    <property type="match status" value="1"/>
</dbReference>
<dbReference type="SFLD" id="SFLDS00029">
    <property type="entry name" value="Radical_SAM"/>
    <property type="match status" value="1"/>
</dbReference>
<dbReference type="SMART" id="SM00729">
    <property type="entry name" value="Elp3"/>
    <property type="match status" value="1"/>
</dbReference>
<dbReference type="SUPFAM" id="SSF102114">
    <property type="entry name" value="Radical SAM enzymes"/>
    <property type="match status" value="1"/>
</dbReference>
<dbReference type="PROSITE" id="PS51918">
    <property type="entry name" value="RADICAL_SAM"/>
    <property type="match status" value="1"/>
</dbReference>
<name>LIPA_PSEFS</name>
<evidence type="ECO:0000255" key="1">
    <source>
        <dbReference type="HAMAP-Rule" id="MF_00206"/>
    </source>
</evidence>
<evidence type="ECO:0000255" key="2">
    <source>
        <dbReference type="PROSITE-ProRule" id="PRU01266"/>
    </source>
</evidence>
<accession>C3K2L8</accession>
<keyword id="KW-0004">4Fe-4S</keyword>
<keyword id="KW-0963">Cytoplasm</keyword>
<keyword id="KW-0408">Iron</keyword>
<keyword id="KW-0411">Iron-sulfur</keyword>
<keyword id="KW-0479">Metal-binding</keyword>
<keyword id="KW-0949">S-adenosyl-L-methionine</keyword>
<keyword id="KW-0808">Transferase</keyword>
<protein>
    <recommendedName>
        <fullName evidence="1">Lipoyl synthase</fullName>
        <ecNumber evidence="1">2.8.1.8</ecNumber>
    </recommendedName>
    <alternativeName>
        <fullName evidence="1">Lip-syn</fullName>
        <shortName evidence="1">LS</shortName>
    </alternativeName>
    <alternativeName>
        <fullName evidence="1">Lipoate synthase</fullName>
    </alternativeName>
    <alternativeName>
        <fullName evidence="1">Lipoic acid synthase</fullName>
    </alternativeName>
    <alternativeName>
        <fullName evidence="1">Sulfur insertion protein LipA</fullName>
    </alternativeName>
</protein>
<sequence>MTTDAVQTMIPTLDITERPAPAPRAKVEAGVKLRGAEKVARIPVKIIPTTELPKKPDWIRVRIPVSPEVDRIKALLRKHKLHSVCEEASCPNLGECFSGGTATFMIMGDICTRRCPFCDVGHGRPKPLDVNEPESLAIAIADLKLKYVVITSVDRDDLRDGGAQHFADCIREIRKLSPNVMLETLVPDYRGRMDVALEITAAEPPDVFNHNLETVPRLYKAARPGSDYQWSLTLLQKFKQMMPHIPTKSGLMLGLGETDEEVIEVMKRMREHDIDMLTLGQYLQPSRSHLPVQRFVHPDTFAWFAEEGYKMGFKNVASGPLVRSSYHADEQAKLVKASLVS</sequence>
<reference key="1">
    <citation type="journal article" date="2009" name="Genome Biol.">
        <title>Genomic and genetic analyses of diversity and plant interactions of Pseudomonas fluorescens.</title>
        <authorList>
            <person name="Silby M.W."/>
            <person name="Cerdeno-Tarraga A.M."/>
            <person name="Vernikos G.S."/>
            <person name="Giddens S.R."/>
            <person name="Jackson R.W."/>
            <person name="Preston G.M."/>
            <person name="Zhang X.-X."/>
            <person name="Moon C.D."/>
            <person name="Gehrig S.M."/>
            <person name="Godfrey S.A.C."/>
            <person name="Knight C.G."/>
            <person name="Malone J.G."/>
            <person name="Robinson Z."/>
            <person name="Spiers A.J."/>
            <person name="Harris S."/>
            <person name="Challis G.L."/>
            <person name="Yaxley A.M."/>
            <person name="Harris D."/>
            <person name="Seeger K."/>
            <person name="Murphy L."/>
            <person name="Rutter S."/>
            <person name="Squares R."/>
            <person name="Quail M.A."/>
            <person name="Saunders E."/>
            <person name="Mavromatis K."/>
            <person name="Brettin T.S."/>
            <person name="Bentley S.D."/>
            <person name="Hothersall J."/>
            <person name="Stephens E."/>
            <person name="Thomas C.M."/>
            <person name="Parkhill J."/>
            <person name="Levy S.B."/>
            <person name="Rainey P.B."/>
            <person name="Thomson N.R."/>
        </authorList>
    </citation>
    <scope>NUCLEOTIDE SEQUENCE [LARGE SCALE GENOMIC DNA]</scope>
    <source>
        <strain>SBW25</strain>
    </source>
</reference>
<feature type="chain" id="PRO_1000204154" description="Lipoyl synthase">
    <location>
        <begin position="1"/>
        <end position="341"/>
    </location>
</feature>
<feature type="domain" description="Radical SAM core" evidence="2">
    <location>
        <begin position="97"/>
        <end position="314"/>
    </location>
</feature>
<feature type="binding site" evidence="1">
    <location>
        <position position="85"/>
    </location>
    <ligand>
        <name>[4Fe-4S] cluster</name>
        <dbReference type="ChEBI" id="CHEBI:49883"/>
        <label>1</label>
    </ligand>
</feature>
<feature type="binding site" evidence="1">
    <location>
        <position position="90"/>
    </location>
    <ligand>
        <name>[4Fe-4S] cluster</name>
        <dbReference type="ChEBI" id="CHEBI:49883"/>
        <label>1</label>
    </ligand>
</feature>
<feature type="binding site" evidence="1">
    <location>
        <position position="96"/>
    </location>
    <ligand>
        <name>[4Fe-4S] cluster</name>
        <dbReference type="ChEBI" id="CHEBI:49883"/>
        <label>1</label>
    </ligand>
</feature>
<feature type="binding site" evidence="1">
    <location>
        <position position="111"/>
    </location>
    <ligand>
        <name>[4Fe-4S] cluster</name>
        <dbReference type="ChEBI" id="CHEBI:49883"/>
        <label>2</label>
        <note>4Fe-4S-S-AdoMet</note>
    </ligand>
</feature>
<feature type="binding site" evidence="1">
    <location>
        <position position="115"/>
    </location>
    <ligand>
        <name>[4Fe-4S] cluster</name>
        <dbReference type="ChEBI" id="CHEBI:49883"/>
        <label>2</label>
        <note>4Fe-4S-S-AdoMet</note>
    </ligand>
</feature>
<feature type="binding site" evidence="1">
    <location>
        <position position="118"/>
    </location>
    <ligand>
        <name>[4Fe-4S] cluster</name>
        <dbReference type="ChEBI" id="CHEBI:49883"/>
        <label>2</label>
        <note>4Fe-4S-S-AdoMet</note>
    </ligand>
</feature>
<feature type="binding site" evidence="1">
    <location>
        <position position="325"/>
    </location>
    <ligand>
        <name>[4Fe-4S] cluster</name>
        <dbReference type="ChEBI" id="CHEBI:49883"/>
        <label>1</label>
    </ligand>
</feature>
<comment type="function">
    <text evidence="1">Catalyzes the radical-mediated insertion of two sulfur atoms into the C-6 and C-8 positions of the octanoyl moiety bound to the lipoyl domains of lipoate-dependent enzymes, thereby converting the octanoylated domains into lipoylated derivatives.</text>
</comment>
<comment type="catalytic activity">
    <reaction evidence="1">
        <text>[[Fe-S] cluster scaffold protein carrying a second [4Fe-4S](2+) cluster] + N(6)-octanoyl-L-lysyl-[protein] + 2 oxidized [2Fe-2S]-[ferredoxin] + 2 S-adenosyl-L-methionine + 4 H(+) = [[Fe-S] cluster scaffold protein] + N(6)-[(R)-dihydrolipoyl]-L-lysyl-[protein] + 4 Fe(3+) + 2 hydrogen sulfide + 2 5'-deoxyadenosine + 2 L-methionine + 2 reduced [2Fe-2S]-[ferredoxin]</text>
        <dbReference type="Rhea" id="RHEA:16585"/>
        <dbReference type="Rhea" id="RHEA-COMP:9928"/>
        <dbReference type="Rhea" id="RHEA-COMP:10000"/>
        <dbReference type="Rhea" id="RHEA-COMP:10001"/>
        <dbReference type="Rhea" id="RHEA-COMP:10475"/>
        <dbReference type="Rhea" id="RHEA-COMP:14568"/>
        <dbReference type="Rhea" id="RHEA-COMP:14569"/>
        <dbReference type="ChEBI" id="CHEBI:15378"/>
        <dbReference type="ChEBI" id="CHEBI:17319"/>
        <dbReference type="ChEBI" id="CHEBI:29034"/>
        <dbReference type="ChEBI" id="CHEBI:29919"/>
        <dbReference type="ChEBI" id="CHEBI:33722"/>
        <dbReference type="ChEBI" id="CHEBI:33737"/>
        <dbReference type="ChEBI" id="CHEBI:33738"/>
        <dbReference type="ChEBI" id="CHEBI:57844"/>
        <dbReference type="ChEBI" id="CHEBI:59789"/>
        <dbReference type="ChEBI" id="CHEBI:78809"/>
        <dbReference type="ChEBI" id="CHEBI:83100"/>
        <dbReference type="EC" id="2.8.1.8"/>
    </reaction>
</comment>
<comment type="cofactor">
    <cofactor evidence="1">
        <name>[4Fe-4S] cluster</name>
        <dbReference type="ChEBI" id="CHEBI:49883"/>
    </cofactor>
    <text evidence="1">Binds 2 [4Fe-4S] clusters per subunit. One cluster is coordinated with 3 cysteines and an exchangeable S-adenosyl-L-methionine.</text>
</comment>
<comment type="pathway">
    <text evidence="1">Protein modification; protein lipoylation via endogenous pathway; protein N(6)-(lipoyl)lysine from octanoyl-[acyl-carrier-protein]: step 2/2.</text>
</comment>
<comment type="subcellular location">
    <subcellularLocation>
        <location evidence="1">Cytoplasm</location>
    </subcellularLocation>
</comment>
<comment type="similarity">
    <text evidence="1">Belongs to the radical SAM superfamily. Lipoyl synthase family.</text>
</comment>